<gene>
    <name type="primary">fwdC</name>
    <name type="ordered locus">MJ1171</name>
</gene>
<feature type="chain" id="PRO_0000144194" description="Tungsten-containing formylmethanofuran dehydrogenase 2 subunit C">
    <location>
        <begin position="1"/>
        <end position="273"/>
    </location>
</feature>
<feature type="repeat" description="1">
    <location>
        <begin position="78"/>
        <end position="90"/>
    </location>
</feature>
<feature type="repeat" description="2">
    <location>
        <begin position="97"/>
        <end position="109"/>
    </location>
</feature>
<feature type="repeat" description="3">
    <location>
        <begin position="116"/>
        <end position="128"/>
    </location>
</feature>
<feature type="repeat" description="4">
    <location>
        <begin position="142"/>
        <end position="154"/>
    </location>
</feature>
<feature type="repeat" description="5">
    <location>
        <begin position="161"/>
        <end position="173"/>
    </location>
</feature>
<feature type="repeat" description="6">
    <location>
        <begin position="180"/>
        <end position="192"/>
    </location>
</feature>
<feature type="repeat" description="7">
    <location>
        <begin position="199"/>
        <end position="211"/>
    </location>
</feature>
<feature type="region of interest" description="7 X 13 AA repeats of [GW]-X-X-[MQ]-X-X-G-X-[IL]-X-[IV]-X-G">
    <location>
        <begin position="78"/>
        <end position="211"/>
    </location>
</feature>
<protein>
    <recommendedName>
        <fullName>Tungsten-containing formylmethanofuran dehydrogenase 2 subunit C</fullName>
        <ecNumber evidence="2">1.2.7.12</ecNumber>
    </recommendedName>
    <alternativeName>
        <fullName>Tungsten-containing formylmethanofuran dehydrogenase II subunit C</fullName>
    </alternativeName>
</protein>
<name>FWDC_METJA</name>
<proteinExistence type="inferred from homology"/>
<reference key="1">
    <citation type="journal article" date="1996" name="Science">
        <title>Complete genome sequence of the methanogenic archaeon, Methanococcus jannaschii.</title>
        <authorList>
            <person name="Bult C.J."/>
            <person name="White O."/>
            <person name="Olsen G.J."/>
            <person name="Zhou L."/>
            <person name="Fleischmann R.D."/>
            <person name="Sutton G.G."/>
            <person name="Blake J.A."/>
            <person name="FitzGerald L.M."/>
            <person name="Clayton R.A."/>
            <person name="Gocayne J.D."/>
            <person name="Kerlavage A.R."/>
            <person name="Dougherty B.A."/>
            <person name="Tomb J.-F."/>
            <person name="Adams M.D."/>
            <person name="Reich C.I."/>
            <person name="Overbeek R."/>
            <person name="Kirkness E.F."/>
            <person name="Weinstock K.G."/>
            <person name="Merrick J.M."/>
            <person name="Glodek A."/>
            <person name="Scott J.L."/>
            <person name="Geoghagen N.S.M."/>
            <person name="Weidman J.F."/>
            <person name="Fuhrmann J.L."/>
            <person name="Nguyen D."/>
            <person name="Utterback T.R."/>
            <person name="Kelley J.M."/>
            <person name="Peterson J.D."/>
            <person name="Sadow P.W."/>
            <person name="Hanna M.C."/>
            <person name="Cotton M.D."/>
            <person name="Roberts K.M."/>
            <person name="Hurst M.A."/>
            <person name="Kaine B.P."/>
            <person name="Borodovsky M."/>
            <person name="Klenk H.-P."/>
            <person name="Fraser C.M."/>
            <person name="Smith H.O."/>
            <person name="Woese C.R."/>
            <person name="Venter J.C."/>
        </authorList>
    </citation>
    <scope>NUCLEOTIDE SEQUENCE [LARGE SCALE GENOMIC DNA]</scope>
    <source>
        <strain>ATCC 43067 / DSM 2661 / JAL-1 / JCM 10045 / NBRC 100440</strain>
    </source>
</reference>
<evidence type="ECO:0000250" key="1"/>
<evidence type="ECO:0000250" key="2">
    <source>
        <dbReference type="UniProtKB" id="Q48943"/>
    </source>
</evidence>
<evidence type="ECO:0000305" key="3"/>
<sequence length="273" mass="29461">MKELILTLQKEIIVPVEMDKVLPEVIENMSLEEIKNIELVQGRKRIKVADIFDVELNDIEGEPRIVIKNSSPKLKYIGSKMTKGEIVVEGDAGMYVGAEMKGGKIVVNGNAESWAGQNMKGGELLIKGNAGDYVGSAYRGDWRGMSGGTIIVEGNAGNEIGEFMSKGLIHIKGNVGIMAGIHQNGGIIIIDGDVDVRVGGEMKAGAIVVYGKVEEILPSFKFEGIVENPVIKLSKKDAGTPIAGTFYKFSGDYVYNKPKGQLYISVDSNPDLI</sequence>
<dbReference type="EC" id="1.2.7.12" evidence="2"/>
<dbReference type="EMBL" id="L77117">
    <property type="protein sequence ID" value="AAB99173.1"/>
    <property type="molecule type" value="Genomic_DNA"/>
</dbReference>
<dbReference type="PIR" id="B64446">
    <property type="entry name" value="B64446"/>
</dbReference>
<dbReference type="RefSeq" id="WP_010870684.1">
    <property type="nucleotide sequence ID" value="NC_000909.1"/>
</dbReference>
<dbReference type="SMR" id="Q58571"/>
<dbReference type="FunCoup" id="Q58571">
    <property type="interactions" value="92"/>
</dbReference>
<dbReference type="STRING" id="243232.MJ_1171"/>
<dbReference type="PaxDb" id="243232-MJ_1171"/>
<dbReference type="EnsemblBacteria" id="AAB99173">
    <property type="protein sequence ID" value="AAB99173"/>
    <property type="gene ID" value="MJ_1171"/>
</dbReference>
<dbReference type="GeneID" id="1452069"/>
<dbReference type="KEGG" id="mja:MJ_1171"/>
<dbReference type="eggNOG" id="arCOG00097">
    <property type="taxonomic scope" value="Archaea"/>
</dbReference>
<dbReference type="HOGENOM" id="CLU_072248_0_0_2"/>
<dbReference type="InParanoid" id="Q58571"/>
<dbReference type="OrthoDB" id="106216at2157"/>
<dbReference type="PhylomeDB" id="Q58571"/>
<dbReference type="UniPathway" id="UPA00640">
    <property type="reaction ID" value="UER00692"/>
</dbReference>
<dbReference type="Proteomes" id="UP000000805">
    <property type="component" value="Chromosome"/>
</dbReference>
<dbReference type="GO" id="GO:0018493">
    <property type="term" value="F:formylmethanofuran dehydrogenase activity"/>
    <property type="evidence" value="ECO:0007669"/>
    <property type="project" value="UniProtKB-EC"/>
</dbReference>
<dbReference type="GO" id="GO:0046914">
    <property type="term" value="F:transition metal ion binding"/>
    <property type="evidence" value="ECO:0007669"/>
    <property type="project" value="InterPro"/>
</dbReference>
<dbReference type="GO" id="GO:0019386">
    <property type="term" value="P:methanogenesis, from carbon dioxide"/>
    <property type="evidence" value="ECO:0007669"/>
    <property type="project" value="UniProtKB-UniPathway"/>
</dbReference>
<dbReference type="CDD" id="cd00980">
    <property type="entry name" value="FwdC/FmdC"/>
    <property type="match status" value="1"/>
</dbReference>
<dbReference type="Gene3D" id="2.160.20.60">
    <property type="entry name" value="Glutamate synthase, alpha subunit, C-terminal domain"/>
    <property type="match status" value="2"/>
</dbReference>
<dbReference type="InterPro" id="IPR054942">
    <property type="entry name" value="FMH_DH_FwdC"/>
</dbReference>
<dbReference type="InterPro" id="IPR017550">
    <property type="entry name" value="Formylmethanofuran_DH_suC"/>
</dbReference>
<dbReference type="InterPro" id="IPR002489">
    <property type="entry name" value="Glu_synth_asu_C"/>
</dbReference>
<dbReference type="InterPro" id="IPR036485">
    <property type="entry name" value="Glu_synth_asu_C_sf"/>
</dbReference>
<dbReference type="NCBIfam" id="NF042910">
    <property type="entry name" value="FMH_DH_FwdC"/>
    <property type="match status" value="1"/>
</dbReference>
<dbReference type="NCBIfam" id="TIGR03122">
    <property type="entry name" value="one_C_dehyd_C"/>
    <property type="match status" value="1"/>
</dbReference>
<dbReference type="PANTHER" id="PTHR39673">
    <property type="entry name" value="TUNGSTEN FORMYLMETHANOFURAN DEHYDROGENASE, SUBUNIT C (FWDC)"/>
    <property type="match status" value="1"/>
</dbReference>
<dbReference type="PANTHER" id="PTHR39673:SF5">
    <property type="entry name" value="TUNGSTEN-CONTAINING FORMYLMETHANOFURAN DEHYDROGENASE 2 SUBUNIT C"/>
    <property type="match status" value="1"/>
</dbReference>
<dbReference type="Pfam" id="PF01493">
    <property type="entry name" value="GXGXG"/>
    <property type="match status" value="1"/>
</dbReference>
<dbReference type="SUPFAM" id="SSF69336">
    <property type="entry name" value="Alpha subunit of glutamate synthase, C-terminal domain"/>
    <property type="match status" value="1"/>
</dbReference>
<comment type="function">
    <text evidence="2">Catalyzes the reversible oxidation of CO(2) and methanofuran (MFR) to N-formylmethanofuran (CHO-MFR). This enzyme is oxygen-labile.</text>
</comment>
<comment type="catalytic activity">
    <reaction evidence="2">
        <text>N-formylmethanofuran + 2 oxidized [2Fe-2S]-[ferredoxin] + H2O = methanofuran + 2 reduced [2Fe-2S]-[ferredoxin] + CO2 + H(+)</text>
        <dbReference type="Rhea" id="RHEA:19841"/>
        <dbReference type="Rhea" id="RHEA-COMP:10000"/>
        <dbReference type="Rhea" id="RHEA-COMP:10001"/>
        <dbReference type="ChEBI" id="CHEBI:15377"/>
        <dbReference type="ChEBI" id="CHEBI:15378"/>
        <dbReference type="ChEBI" id="CHEBI:16526"/>
        <dbReference type="ChEBI" id="CHEBI:33737"/>
        <dbReference type="ChEBI" id="CHEBI:33738"/>
        <dbReference type="ChEBI" id="CHEBI:57727"/>
        <dbReference type="ChEBI" id="CHEBI:58151"/>
        <dbReference type="EC" id="1.2.7.12"/>
    </reaction>
</comment>
<comment type="pathway">
    <text>One-carbon metabolism; methanogenesis from CO(2); 5,10-methenyl-5,6,7,8-tetrahydromethanopterin from CO(2): step 1/3.</text>
</comment>
<comment type="subunit">
    <text evidence="1">This enzyme is composed of six subunits FwdA, FwdC, FwdD, FwdE, FwdF and FwdG.</text>
</comment>
<comment type="similarity">
    <text evidence="3">Belongs to the FwdC/FmdC family.</text>
</comment>
<keyword id="KW-0484">Methanogenesis</keyword>
<keyword id="KW-0560">Oxidoreductase</keyword>
<keyword id="KW-1185">Reference proteome</keyword>
<keyword id="KW-0677">Repeat</keyword>
<accession>Q58571</accession>
<organism>
    <name type="scientific">Methanocaldococcus jannaschii (strain ATCC 43067 / DSM 2661 / JAL-1 / JCM 10045 / NBRC 100440)</name>
    <name type="common">Methanococcus jannaschii</name>
    <dbReference type="NCBI Taxonomy" id="243232"/>
    <lineage>
        <taxon>Archaea</taxon>
        <taxon>Methanobacteriati</taxon>
        <taxon>Methanobacteriota</taxon>
        <taxon>Methanomada group</taxon>
        <taxon>Methanococci</taxon>
        <taxon>Methanococcales</taxon>
        <taxon>Methanocaldococcaceae</taxon>
        <taxon>Methanocaldococcus</taxon>
    </lineage>
</organism>